<sequence>MSITLSDSAAARVNTFLANRGKGFGLRLGVRTSGCSGMAYVLEFVDEPTAEDTVFEDKGVKVVVDGKSLQFLDGTQLDFVKEGLNEGFKFSNPNVKDECGCGESFHV</sequence>
<accession>Q57LH1</accession>
<evidence type="ECO:0000255" key="1">
    <source>
        <dbReference type="HAMAP-Rule" id="MF_01429"/>
    </source>
</evidence>
<protein>
    <recommendedName>
        <fullName evidence="1">Iron-binding protein IscA</fullName>
    </recommendedName>
    <alternativeName>
        <fullName evidence="1">Iron-sulfur cluster assembly protein</fullName>
    </alternativeName>
</protein>
<keyword id="KW-0408">Iron</keyword>
<keyword id="KW-0479">Metal-binding</keyword>
<comment type="function">
    <text evidence="1">Is able to transfer iron-sulfur clusters to apo-ferredoxin. Multiple cycles of [2Fe2S] cluster formation and transfer are observed, suggesting that IscA acts catalytically. Recruits intracellular free iron so as to provide iron for the assembly of transient iron-sulfur cluster in IscU in the presence of IscS, L-cysteine and the thioredoxin reductase system TrxA/TrxB.</text>
</comment>
<comment type="cofactor">
    <cofactor evidence="1">
        <name>Fe cation</name>
        <dbReference type="ChEBI" id="CHEBI:24875"/>
    </cofactor>
    <text evidence="1">Binds 2 iron ions per dimer. The dimer may bind additional iron ions.</text>
</comment>
<comment type="subunit">
    <text evidence="1">Homodimer; may form tetramers and higher multimers.</text>
</comment>
<comment type="similarity">
    <text evidence="1">Belongs to the HesB/IscA family.</text>
</comment>
<organism>
    <name type="scientific">Salmonella choleraesuis (strain SC-B67)</name>
    <dbReference type="NCBI Taxonomy" id="321314"/>
    <lineage>
        <taxon>Bacteria</taxon>
        <taxon>Pseudomonadati</taxon>
        <taxon>Pseudomonadota</taxon>
        <taxon>Gammaproteobacteria</taxon>
        <taxon>Enterobacterales</taxon>
        <taxon>Enterobacteriaceae</taxon>
        <taxon>Salmonella</taxon>
    </lineage>
</organism>
<dbReference type="EMBL" id="AE017220">
    <property type="protein sequence ID" value="AAX66441.1"/>
    <property type="molecule type" value="Genomic_DNA"/>
</dbReference>
<dbReference type="RefSeq" id="WP_000028952.1">
    <property type="nucleotide sequence ID" value="NC_006905.1"/>
</dbReference>
<dbReference type="SMR" id="Q57LH1"/>
<dbReference type="GeneID" id="66756972"/>
<dbReference type="KEGG" id="sec:SCH_2535"/>
<dbReference type="HOGENOM" id="CLU_069054_5_1_6"/>
<dbReference type="Proteomes" id="UP000000538">
    <property type="component" value="Chromosome"/>
</dbReference>
<dbReference type="GO" id="GO:0005829">
    <property type="term" value="C:cytosol"/>
    <property type="evidence" value="ECO:0007669"/>
    <property type="project" value="TreeGrafter"/>
</dbReference>
<dbReference type="GO" id="GO:0051537">
    <property type="term" value="F:2 iron, 2 sulfur cluster binding"/>
    <property type="evidence" value="ECO:0007669"/>
    <property type="project" value="UniProtKB-ARBA"/>
</dbReference>
<dbReference type="GO" id="GO:0005506">
    <property type="term" value="F:iron ion binding"/>
    <property type="evidence" value="ECO:0007669"/>
    <property type="project" value="UniProtKB-UniRule"/>
</dbReference>
<dbReference type="GO" id="GO:0016226">
    <property type="term" value="P:iron-sulfur cluster assembly"/>
    <property type="evidence" value="ECO:0007669"/>
    <property type="project" value="UniProtKB-UniRule"/>
</dbReference>
<dbReference type="FunFam" id="2.60.300.12:FF:000001">
    <property type="entry name" value="Iron-binding protein IscA"/>
    <property type="match status" value="1"/>
</dbReference>
<dbReference type="Gene3D" id="2.60.300.12">
    <property type="entry name" value="HesB-like domain"/>
    <property type="match status" value="1"/>
</dbReference>
<dbReference type="HAMAP" id="MF_01429">
    <property type="entry name" value="Fe_S_insert_IscA"/>
    <property type="match status" value="1"/>
</dbReference>
<dbReference type="InterPro" id="IPR050322">
    <property type="entry name" value="Fe-S_cluster_asmbl/transfer"/>
</dbReference>
<dbReference type="InterPro" id="IPR000361">
    <property type="entry name" value="FeS_biogenesis"/>
</dbReference>
<dbReference type="InterPro" id="IPR016092">
    <property type="entry name" value="FeS_cluster_insertion"/>
</dbReference>
<dbReference type="InterPro" id="IPR017870">
    <property type="entry name" value="FeS_cluster_insertion_CS"/>
</dbReference>
<dbReference type="InterPro" id="IPR035903">
    <property type="entry name" value="HesB-like_dom_sf"/>
</dbReference>
<dbReference type="InterPro" id="IPR011302">
    <property type="entry name" value="IscA_proteobacteria"/>
</dbReference>
<dbReference type="NCBIfam" id="TIGR00049">
    <property type="entry name" value="iron-sulfur cluster assembly accessory protein"/>
    <property type="match status" value="1"/>
</dbReference>
<dbReference type="NCBIfam" id="TIGR02011">
    <property type="entry name" value="IscA"/>
    <property type="match status" value="1"/>
</dbReference>
<dbReference type="NCBIfam" id="NF007049">
    <property type="entry name" value="PRK09502.1"/>
    <property type="match status" value="1"/>
</dbReference>
<dbReference type="PANTHER" id="PTHR10072:SF41">
    <property type="entry name" value="IRON-SULFUR CLUSTER ASSEMBLY 1 HOMOLOG, MITOCHONDRIAL"/>
    <property type="match status" value="1"/>
</dbReference>
<dbReference type="PANTHER" id="PTHR10072">
    <property type="entry name" value="IRON-SULFUR CLUSTER ASSEMBLY PROTEIN"/>
    <property type="match status" value="1"/>
</dbReference>
<dbReference type="Pfam" id="PF01521">
    <property type="entry name" value="Fe-S_biosyn"/>
    <property type="match status" value="1"/>
</dbReference>
<dbReference type="SUPFAM" id="SSF89360">
    <property type="entry name" value="HesB-like domain"/>
    <property type="match status" value="1"/>
</dbReference>
<dbReference type="PROSITE" id="PS01152">
    <property type="entry name" value="HESB"/>
    <property type="match status" value="1"/>
</dbReference>
<proteinExistence type="inferred from homology"/>
<reference key="1">
    <citation type="journal article" date="2005" name="Nucleic Acids Res.">
        <title>The genome sequence of Salmonella enterica serovar Choleraesuis, a highly invasive and resistant zoonotic pathogen.</title>
        <authorList>
            <person name="Chiu C.-H."/>
            <person name="Tang P."/>
            <person name="Chu C."/>
            <person name="Hu S."/>
            <person name="Bao Q."/>
            <person name="Yu J."/>
            <person name="Chou Y.-Y."/>
            <person name="Wang H.-S."/>
            <person name="Lee Y.-S."/>
        </authorList>
    </citation>
    <scope>NUCLEOTIDE SEQUENCE [LARGE SCALE GENOMIC DNA]</scope>
    <source>
        <strain>SC-B67</strain>
    </source>
</reference>
<name>ISCA_SALCH</name>
<feature type="chain" id="PRO_0000077001" description="Iron-binding protein IscA">
    <location>
        <begin position="1"/>
        <end position="107"/>
    </location>
</feature>
<feature type="binding site" evidence="1">
    <location>
        <position position="35"/>
    </location>
    <ligand>
        <name>Fe cation</name>
        <dbReference type="ChEBI" id="CHEBI:24875"/>
    </ligand>
</feature>
<feature type="binding site" evidence="1">
    <location>
        <position position="99"/>
    </location>
    <ligand>
        <name>Fe cation</name>
        <dbReference type="ChEBI" id="CHEBI:24875"/>
    </ligand>
</feature>
<feature type="binding site" evidence="1">
    <location>
        <position position="101"/>
    </location>
    <ligand>
        <name>Fe cation</name>
        <dbReference type="ChEBI" id="CHEBI:24875"/>
    </ligand>
</feature>
<gene>
    <name evidence="1" type="primary">iscA</name>
    <name type="ordered locus">SCH_2535</name>
</gene>